<dbReference type="EMBL" id="AJ720560">
    <property type="protein sequence ID" value="CAG32219.1"/>
    <property type="molecule type" value="mRNA"/>
</dbReference>
<dbReference type="RefSeq" id="NP_001258865.1">
    <property type="nucleotide sequence ID" value="NM_001271936.2"/>
</dbReference>
<dbReference type="SMR" id="Q5ZJ74"/>
<dbReference type="FunCoup" id="Q5ZJ74">
    <property type="interactions" value="705"/>
</dbReference>
<dbReference type="STRING" id="9031.ENSGALP00000020553"/>
<dbReference type="PaxDb" id="9031-ENSGALP00000020553"/>
<dbReference type="GeneID" id="427463"/>
<dbReference type="KEGG" id="gga:427463"/>
<dbReference type="CTD" id="81689"/>
<dbReference type="VEuPathDB" id="HostDB:geneid_427463"/>
<dbReference type="eggNOG" id="KOG1120">
    <property type="taxonomic scope" value="Eukaryota"/>
</dbReference>
<dbReference type="HOGENOM" id="CLU_069054_4_0_1"/>
<dbReference type="InParanoid" id="Q5ZJ74"/>
<dbReference type="OMA" id="LYIYGMQ"/>
<dbReference type="OrthoDB" id="333486at2759"/>
<dbReference type="PhylomeDB" id="Q5ZJ74"/>
<dbReference type="TreeFam" id="TF314956"/>
<dbReference type="PRO" id="PR:Q5ZJ74"/>
<dbReference type="Proteomes" id="UP000000539">
    <property type="component" value="Unassembled WGS sequence"/>
</dbReference>
<dbReference type="GO" id="GO:0005737">
    <property type="term" value="C:cytoplasm"/>
    <property type="evidence" value="ECO:0000318"/>
    <property type="project" value="GO_Central"/>
</dbReference>
<dbReference type="GO" id="GO:0005739">
    <property type="term" value="C:mitochondrion"/>
    <property type="evidence" value="ECO:0000318"/>
    <property type="project" value="GO_Central"/>
</dbReference>
<dbReference type="GO" id="GO:0051537">
    <property type="term" value="F:2 iron, 2 sulfur cluster binding"/>
    <property type="evidence" value="ECO:0000318"/>
    <property type="project" value="GO_Central"/>
</dbReference>
<dbReference type="GO" id="GO:0046872">
    <property type="term" value="F:metal ion binding"/>
    <property type="evidence" value="ECO:0007669"/>
    <property type="project" value="UniProtKB-KW"/>
</dbReference>
<dbReference type="GO" id="GO:0016226">
    <property type="term" value="P:iron-sulfur cluster assembly"/>
    <property type="evidence" value="ECO:0000318"/>
    <property type="project" value="GO_Central"/>
</dbReference>
<dbReference type="FunFam" id="2.60.300.12:FF:000001">
    <property type="entry name" value="Iron-binding protein IscA"/>
    <property type="match status" value="1"/>
</dbReference>
<dbReference type="Gene3D" id="2.60.300.12">
    <property type="entry name" value="HesB-like domain"/>
    <property type="match status" value="1"/>
</dbReference>
<dbReference type="InterPro" id="IPR050322">
    <property type="entry name" value="Fe-S_cluster_asmbl/transfer"/>
</dbReference>
<dbReference type="InterPro" id="IPR000361">
    <property type="entry name" value="FeS_biogenesis"/>
</dbReference>
<dbReference type="InterPro" id="IPR016092">
    <property type="entry name" value="FeS_cluster_insertion"/>
</dbReference>
<dbReference type="InterPro" id="IPR017870">
    <property type="entry name" value="FeS_cluster_insertion_CS"/>
</dbReference>
<dbReference type="InterPro" id="IPR035903">
    <property type="entry name" value="HesB-like_dom_sf"/>
</dbReference>
<dbReference type="NCBIfam" id="TIGR00049">
    <property type="entry name" value="iron-sulfur cluster assembly accessory protein"/>
    <property type="match status" value="1"/>
</dbReference>
<dbReference type="PANTHER" id="PTHR10072:SF41">
    <property type="entry name" value="IRON-SULFUR CLUSTER ASSEMBLY 1 HOMOLOG, MITOCHONDRIAL"/>
    <property type="match status" value="1"/>
</dbReference>
<dbReference type="PANTHER" id="PTHR10072">
    <property type="entry name" value="IRON-SULFUR CLUSTER ASSEMBLY PROTEIN"/>
    <property type="match status" value="1"/>
</dbReference>
<dbReference type="Pfam" id="PF01521">
    <property type="entry name" value="Fe-S_biosyn"/>
    <property type="match status" value="1"/>
</dbReference>
<dbReference type="SUPFAM" id="SSF89360">
    <property type="entry name" value="HesB-like domain"/>
    <property type="match status" value="1"/>
</dbReference>
<dbReference type="PROSITE" id="PS01152">
    <property type="entry name" value="HESB"/>
    <property type="match status" value="1"/>
</dbReference>
<accession>Q5ZJ74</accession>
<gene>
    <name type="primary">ISCA1</name>
    <name type="synonym">HBLD2</name>
    <name type="ORF">RCJMB04_20e4</name>
</gene>
<reference key="1">
    <citation type="journal article" date="2005" name="Genome Biol.">
        <title>Full-length cDNAs from chicken bursal lymphocytes to facilitate gene function analysis.</title>
        <authorList>
            <person name="Caldwell R.B."/>
            <person name="Kierzek A.M."/>
            <person name="Arakawa H."/>
            <person name="Bezzubov Y."/>
            <person name="Zaim J."/>
            <person name="Fiedler P."/>
            <person name="Kutter S."/>
            <person name="Blagodatski A."/>
            <person name="Kostovska D."/>
            <person name="Koter M."/>
            <person name="Plachy J."/>
            <person name="Carninci P."/>
            <person name="Hayashizaki Y."/>
            <person name="Buerstedde J.-M."/>
        </authorList>
    </citation>
    <scope>NUCLEOTIDE SEQUENCE [LARGE SCALE MRNA]</scope>
    <source>
        <strain>CB</strain>
        <tissue>Bursa of Fabricius</tissue>
    </source>
</reference>
<comment type="function">
    <text evidence="2">Involved in the maturation of mitochondrial 4Fe-4S proteins functioning late in the iron-sulfur cluster assembly pathway. Probably involved in the binding of an intermediate of Fe/S cluster assembly.</text>
</comment>
<comment type="subcellular location">
    <subcellularLocation>
        <location evidence="2">Mitochondrion</location>
    </subcellularLocation>
</comment>
<comment type="similarity">
    <text evidence="4">Belongs to the HesB/IscA family.</text>
</comment>
<keyword id="KW-0408">Iron</keyword>
<keyword id="KW-0411">Iron-sulfur</keyword>
<keyword id="KW-0479">Metal-binding</keyword>
<keyword id="KW-0496">Mitochondrion</keyword>
<keyword id="KW-1185">Reference proteome</keyword>
<keyword id="KW-0809">Transit peptide</keyword>
<sequence length="129" mass="14125">MASSVVRATVRAVSKRKIQATRAALTLTPSAVQKIKQLLKDQPEHVGVKVGVRTRGCNGLSYTLEYTKSKGDSDEEVVQDGVRVFIEKKAQLTLLGTEMDYVEDKLSSEFVFNNPNIKGTCGCGESFNI</sequence>
<name>ISCA1_CHICK</name>
<feature type="transit peptide" description="Mitochondrion" evidence="3">
    <location>
        <begin position="1"/>
        <end position="12"/>
    </location>
</feature>
<feature type="chain" id="PRO_0000042738" description="Iron-sulfur cluster assembly 1 homolog, mitochondrial">
    <location>
        <begin position="13"/>
        <end position="129"/>
    </location>
</feature>
<feature type="binding site" evidence="1">
    <location>
        <position position="57"/>
    </location>
    <ligand>
        <name>Fe cation</name>
        <dbReference type="ChEBI" id="CHEBI:24875"/>
    </ligand>
</feature>
<feature type="binding site" evidence="1">
    <location>
        <position position="121"/>
    </location>
    <ligand>
        <name>Fe cation</name>
        <dbReference type="ChEBI" id="CHEBI:24875"/>
    </ligand>
</feature>
<feature type="binding site" evidence="1">
    <location>
        <position position="123"/>
    </location>
    <ligand>
        <name>Fe cation</name>
        <dbReference type="ChEBI" id="CHEBI:24875"/>
    </ligand>
</feature>
<organism>
    <name type="scientific">Gallus gallus</name>
    <name type="common">Chicken</name>
    <dbReference type="NCBI Taxonomy" id="9031"/>
    <lineage>
        <taxon>Eukaryota</taxon>
        <taxon>Metazoa</taxon>
        <taxon>Chordata</taxon>
        <taxon>Craniata</taxon>
        <taxon>Vertebrata</taxon>
        <taxon>Euteleostomi</taxon>
        <taxon>Archelosauria</taxon>
        <taxon>Archosauria</taxon>
        <taxon>Dinosauria</taxon>
        <taxon>Saurischia</taxon>
        <taxon>Theropoda</taxon>
        <taxon>Coelurosauria</taxon>
        <taxon>Aves</taxon>
        <taxon>Neognathae</taxon>
        <taxon>Galloanserae</taxon>
        <taxon>Galliformes</taxon>
        <taxon>Phasianidae</taxon>
        <taxon>Phasianinae</taxon>
        <taxon>Gallus</taxon>
    </lineage>
</organism>
<evidence type="ECO:0000250" key="1">
    <source>
        <dbReference type="UniProtKB" id="P0AAC8"/>
    </source>
</evidence>
<evidence type="ECO:0000250" key="2">
    <source>
        <dbReference type="UniProtKB" id="Q9BUE6"/>
    </source>
</evidence>
<evidence type="ECO:0000255" key="3"/>
<evidence type="ECO:0000305" key="4"/>
<proteinExistence type="evidence at transcript level"/>
<protein>
    <recommendedName>
        <fullName>Iron-sulfur cluster assembly 1 homolog, mitochondrial</fullName>
    </recommendedName>
    <alternativeName>
        <fullName>HESB-like domain-containing protein 2</fullName>
    </alternativeName>
    <alternativeName>
        <fullName>Iron-sulfur assembly protein IscA</fullName>
    </alternativeName>
</protein>